<sequence length="315" mass="34294">MRVVFMGTPDFAVGTLKAIIEAGHDVAAVVTQPDKPRGRSKSLVFSPVKDEAVAHGITVLQPERARDEAFVEELRTYNADVIVVVAFGQLLPASIINMPRYGCINVHASLLPKYRGASPIQWAVIDGCEYSGVTTMKMDEGLDTGDILMVEKVKLDAKETGGSLFDRLSDVGAHLLVKTLEGLEAGTITPVKQDDSESTYVKMLHKSFGKMDFNKSAAELERLIRGLNPWPSAFTYIDGKMLKIWDADVADNISEVQTEEVKPGQVVTVGKNTFTIACGQGYLVVNEVQLEGKKRMDSGSFLRGNQLEAGVMLGE</sequence>
<keyword id="KW-0648">Protein biosynthesis</keyword>
<keyword id="KW-1185">Reference proteome</keyword>
<keyword id="KW-0808">Transferase</keyword>
<feature type="chain" id="PRO_1000203856" description="Methionyl-tRNA formyltransferase">
    <location>
        <begin position="1"/>
        <end position="315"/>
    </location>
</feature>
<feature type="binding site" evidence="1">
    <location>
        <begin position="109"/>
        <end position="112"/>
    </location>
    <ligand>
        <name>(6S)-5,6,7,8-tetrahydrofolate</name>
        <dbReference type="ChEBI" id="CHEBI:57453"/>
    </ligand>
</feature>
<accession>C4Z520</accession>
<proteinExistence type="inferred from homology"/>
<reference key="1">
    <citation type="journal article" date="2009" name="Proc. Natl. Acad. Sci. U.S.A.">
        <title>Characterizing a model human gut microbiota composed of members of its two dominant bacterial phyla.</title>
        <authorList>
            <person name="Mahowald M.A."/>
            <person name="Rey F.E."/>
            <person name="Seedorf H."/>
            <person name="Turnbaugh P.J."/>
            <person name="Fulton R.S."/>
            <person name="Wollam A."/>
            <person name="Shah N."/>
            <person name="Wang C."/>
            <person name="Magrini V."/>
            <person name="Wilson R.K."/>
            <person name="Cantarel B.L."/>
            <person name="Coutinho P.M."/>
            <person name="Henrissat B."/>
            <person name="Crock L.W."/>
            <person name="Russell A."/>
            <person name="Verberkmoes N.C."/>
            <person name="Hettich R.L."/>
            <person name="Gordon J.I."/>
        </authorList>
    </citation>
    <scope>NUCLEOTIDE SEQUENCE [LARGE SCALE GENOMIC DNA]</scope>
    <source>
        <strain>ATCC 27750 / DSM 3376 / VPI C15-48 / C15-B4</strain>
    </source>
</reference>
<organism>
    <name type="scientific">Lachnospira eligens (strain ATCC 27750 / DSM 3376 / VPI C15-48 / C15-B4)</name>
    <name type="common">Eubacterium eligens</name>
    <dbReference type="NCBI Taxonomy" id="515620"/>
    <lineage>
        <taxon>Bacteria</taxon>
        <taxon>Bacillati</taxon>
        <taxon>Bacillota</taxon>
        <taxon>Clostridia</taxon>
        <taxon>Lachnospirales</taxon>
        <taxon>Lachnospiraceae</taxon>
        <taxon>Lachnospira</taxon>
    </lineage>
</organism>
<dbReference type="EC" id="2.1.2.9" evidence="1"/>
<dbReference type="EMBL" id="CP001104">
    <property type="protein sequence ID" value="ACR71724.1"/>
    <property type="molecule type" value="Genomic_DNA"/>
</dbReference>
<dbReference type="RefSeq" id="WP_012738960.1">
    <property type="nucleotide sequence ID" value="NC_012778.1"/>
</dbReference>
<dbReference type="SMR" id="C4Z520"/>
<dbReference type="STRING" id="515620.EUBELI_00716"/>
<dbReference type="GeneID" id="41355460"/>
<dbReference type="KEGG" id="eel:EUBELI_00716"/>
<dbReference type="eggNOG" id="COG0223">
    <property type="taxonomic scope" value="Bacteria"/>
</dbReference>
<dbReference type="HOGENOM" id="CLU_033347_1_1_9"/>
<dbReference type="Proteomes" id="UP000001476">
    <property type="component" value="Chromosome"/>
</dbReference>
<dbReference type="GO" id="GO:0005829">
    <property type="term" value="C:cytosol"/>
    <property type="evidence" value="ECO:0007669"/>
    <property type="project" value="TreeGrafter"/>
</dbReference>
<dbReference type="GO" id="GO:0004479">
    <property type="term" value="F:methionyl-tRNA formyltransferase activity"/>
    <property type="evidence" value="ECO:0007669"/>
    <property type="project" value="UniProtKB-UniRule"/>
</dbReference>
<dbReference type="CDD" id="cd08646">
    <property type="entry name" value="FMT_core_Met-tRNA-FMT_N"/>
    <property type="match status" value="1"/>
</dbReference>
<dbReference type="CDD" id="cd08704">
    <property type="entry name" value="Met_tRNA_FMT_C"/>
    <property type="match status" value="1"/>
</dbReference>
<dbReference type="FunFam" id="3.40.50.12230:FF:000001">
    <property type="entry name" value="Methionyl-tRNA formyltransferase"/>
    <property type="match status" value="1"/>
</dbReference>
<dbReference type="Gene3D" id="3.40.50.12230">
    <property type="match status" value="1"/>
</dbReference>
<dbReference type="HAMAP" id="MF_00182">
    <property type="entry name" value="Formyl_trans"/>
    <property type="match status" value="1"/>
</dbReference>
<dbReference type="InterPro" id="IPR005794">
    <property type="entry name" value="Fmt"/>
</dbReference>
<dbReference type="InterPro" id="IPR005793">
    <property type="entry name" value="Formyl_trans_C"/>
</dbReference>
<dbReference type="InterPro" id="IPR002376">
    <property type="entry name" value="Formyl_transf_N"/>
</dbReference>
<dbReference type="InterPro" id="IPR036477">
    <property type="entry name" value="Formyl_transf_N_sf"/>
</dbReference>
<dbReference type="InterPro" id="IPR011034">
    <property type="entry name" value="Formyl_transferase-like_C_sf"/>
</dbReference>
<dbReference type="InterPro" id="IPR001555">
    <property type="entry name" value="GART_AS"/>
</dbReference>
<dbReference type="InterPro" id="IPR044135">
    <property type="entry name" value="Met-tRNA-FMT_C"/>
</dbReference>
<dbReference type="InterPro" id="IPR041711">
    <property type="entry name" value="Met-tRNA-FMT_N"/>
</dbReference>
<dbReference type="NCBIfam" id="TIGR00460">
    <property type="entry name" value="fmt"/>
    <property type="match status" value="1"/>
</dbReference>
<dbReference type="PANTHER" id="PTHR11138">
    <property type="entry name" value="METHIONYL-TRNA FORMYLTRANSFERASE"/>
    <property type="match status" value="1"/>
</dbReference>
<dbReference type="PANTHER" id="PTHR11138:SF5">
    <property type="entry name" value="METHIONYL-TRNA FORMYLTRANSFERASE, MITOCHONDRIAL"/>
    <property type="match status" value="1"/>
</dbReference>
<dbReference type="Pfam" id="PF02911">
    <property type="entry name" value="Formyl_trans_C"/>
    <property type="match status" value="1"/>
</dbReference>
<dbReference type="Pfam" id="PF00551">
    <property type="entry name" value="Formyl_trans_N"/>
    <property type="match status" value="1"/>
</dbReference>
<dbReference type="SUPFAM" id="SSF50486">
    <property type="entry name" value="FMT C-terminal domain-like"/>
    <property type="match status" value="1"/>
</dbReference>
<dbReference type="SUPFAM" id="SSF53328">
    <property type="entry name" value="Formyltransferase"/>
    <property type="match status" value="1"/>
</dbReference>
<dbReference type="PROSITE" id="PS00373">
    <property type="entry name" value="GART"/>
    <property type="match status" value="1"/>
</dbReference>
<evidence type="ECO:0000255" key="1">
    <source>
        <dbReference type="HAMAP-Rule" id="MF_00182"/>
    </source>
</evidence>
<comment type="function">
    <text evidence="1">Attaches a formyl group to the free amino group of methionyl-tRNA(fMet). The formyl group appears to play a dual role in the initiator identity of N-formylmethionyl-tRNA by promoting its recognition by IF2 and preventing the misappropriation of this tRNA by the elongation apparatus.</text>
</comment>
<comment type="catalytic activity">
    <reaction evidence="1">
        <text>L-methionyl-tRNA(fMet) + (6R)-10-formyltetrahydrofolate = N-formyl-L-methionyl-tRNA(fMet) + (6S)-5,6,7,8-tetrahydrofolate + H(+)</text>
        <dbReference type="Rhea" id="RHEA:24380"/>
        <dbReference type="Rhea" id="RHEA-COMP:9952"/>
        <dbReference type="Rhea" id="RHEA-COMP:9953"/>
        <dbReference type="ChEBI" id="CHEBI:15378"/>
        <dbReference type="ChEBI" id="CHEBI:57453"/>
        <dbReference type="ChEBI" id="CHEBI:78530"/>
        <dbReference type="ChEBI" id="CHEBI:78844"/>
        <dbReference type="ChEBI" id="CHEBI:195366"/>
        <dbReference type="EC" id="2.1.2.9"/>
    </reaction>
</comment>
<comment type="similarity">
    <text evidence="1">Belongs to the Fmt family.</text>
</comment>
<protein>
    <recommendedName>
        <fullName evidence="1">Methionyl-tRNA formyltransferase</fullName>
        <ecNumber evidence="1">2.1.2.9</ecNumber>
    </recommendedName>
</protein>
<name>FMT_LACE2</name>
<gene>
    <name evidence="1" type="primary">fmt</name>
    <name type="ordered locus">EUBELI_00716</name>
</gene>